<organism>
    <name type="scientific">Spodoptera frugiperda</name>
    <name type="common">Fall armyworm</name>
    <dbReference type="NCBI Taxonomy" id="7108"/>
    <lineage>
        <taxon>Eukaryota</taxon>
        <taxon>Metazoa</taxon>
        <taxon>Ecdysozoa</taxon>
        <taxon>Arthropoda</taxon>
        <taxon>Hexapoda</taxon>
        <taxon>Insecta</taxon>
        <taxon>Pterygota</taxon>
        <taxon>Neoptera</taxon>
        <taxon>Endopterygota</taxon>
        <taxon>Lepidoptera</taxon>
        <taxon>Glossata</taxon>
        <taxon>Ditrysia</taxon>
        <taxon>Noctuoidea</taxon>
        <taxon>Noctuidae</taxon>
        <taxon>Amphipyrinae</taxon>
        <taxon>Spodoptera</taxon>
    </lineage>
</organism>
<keyword id="KW-0687">Ribonucleoprotein</keyword>
<keyword id="KW-0689">Ribosomal protein</keyword>
<evidence type="ECO:0000250" key="1"/>
<evidence type="ECO:0000305" key="2"/>
<feature type="initiator methionine" description="Removed" evidence="1">
    <location>
        <position position="1"/>
    </location>
</feature>
<feature type="chain" id="PRO_0000141534" description="Small ribosomal subunit protein eS17">
    <location>
        <begin position="2"/>
        <end position="133"/>
    </location>
</feature>
<sequence>MGRVRTKTVKKAAKIIIEKYYTRLTLDFDTNKRICEEIAIIPTKPLRNKIAGFATHLMRRLRHSQVRGISIKLQEEERERRDNYVPEVSALEHDIIEVDPDTKDMLKMLDFNNINGLQLTQPATQGGYGGRRN</sequence>
<gene>
    <name type="primary">RpS17</name>
</gene>
<dbReference type="EMBL" id="AF400214">
    <property type="protein sequence ID" value="AAK92186.1"/>
    <property type="molecule type" value="mRNA"/>
</dbReference>
<dbReference type="SMR" id="Q962R2"/>
<dbReference type="EnsemblMetazoa" id="XM_035591651.2">
    <property type="protein sequence ID" value="XP_035447544.1"/>
    <property type="gene ID" value="LOC118274219"/>
</dbReference>
<dbReference type="OrthoDB" id="1727351at2759"/>
<dbReference type="Proteomes" id="UP000829999">
    <property type="component" value="Unplaced"/>
</dbReference>
<dbReference type="GO" id="GO:0005829">
    <property type="term" value="C:cytosol"/>
    <property type="evidence" value="ECO:0007669"/>
    <property type="project" value="UniProtKB-ARBA"/>
</dbReference>
<dbReference type="GO" id="GO:1990904">
    <property type="term" value="C:ribonucleoprotein complex"/>
    <property type="evidence" value="ECO:0007669"/>
    <property type="project" value="UniProtKB-KW"/>
</dbReference>
<dbReference type="GO" id="GO:0005840">
    <property type="term" value="C:ribosome"/>
    <property type="evidence" value="ECO:0007669"/>
    <property type="project" value="UniProtKB-KW"/>
</dbReference>
<dbReference type="GO" id="GO:0003735">
    <property type="term" value="F:structural constituent of ribosome"/>
    <property type="evidence" value="ECO:0007669"/>
    <property type="project" value="InterPro"/>
</dbReference>
<dbReference type="GO" id="GO:0006412">
    <property type="term" value="P:translation"/>
    <property type="evidence" value="ECO:0007669"/>
    <property type="project" value="InterPro"/>
</dbReference>
<dbReference type="FunFam" id="1.10.60.20:FF:000001">
    <property type="entry name" value="40S ribosomal protein S17"/>
    <property type="match status" value="1"/>
</dbReference>
<dbReference type="Gene3D" id="1.10.60.20">
    <property type="entry name" value="Ribosomal protein S17e-like"/>
    <property type="match status" value="1"/>
</dbReference>
<dbReference type="HAMAP" id="MF_00511">
    <property type="entry name" value="Ribosomal_eS17"/>
    <property type="match status" value="1"/>
</dbReference>
<dbReference type="InterPro" id="IPR001210">
    <property type="entry name" value="Ribosomal_eS17"/>
</dbReference>
<dbReference type="InterPro" id="IPR018273">
    <property type="entry name" value="Ribosomal_eS17_CS"/>
</dbReference>
<dbReference type="InterPro" id="IPR036401">
    <property type="entry name" value="Ribosomal_eS17_sf"/>
</dbReference>
<dbReference type="PANTHER" id="PTHR10732">
    <property type="entry name" value="40S RIBOSOMAL PROTEIN S17"/>
    <property type="match status" value="1"/>
</dbReference>
<dbReference type="PANTHER" id="PTHR10732:SF0">
    <property type="entry name" value="40S RIBOSOMAL PROTEIN S17"/>
    <property type="match status" value="1"/>
</dbReference>
<dbReference type="Pfam" id="PF00833">
    <property type="entry name" value="Ribosomal_S17e"/>
    <property type="match status" value="1"/>
</dbReference>
<dbReference type="SUPFAM" id="SSF116820">
    <property type="entry name" value="Rps17e-like"/>
    <property type="match status" value="1"/>
</dbReference>
<dbReference type="PROSITE" id="PS00712">
    <property type="entry name" value="RIBOSOMAL_S17E"/>
    <property type="match status" value="1"/>
</dbReference>
<comment type="similarity">
    <text evidence="2">Belongs to the eukaryotic ribosomal protein eS17 family.</text>
</comment>
<proteinExistence type="evidence at transcript level"/>
<protein>
    <recommendedName>
        <fullName evidence="2">Small ribosomal subunit protein eS17</fullName>
    </recommendedName>
    <alternativeName>
        <fullName>40S ribosomal protein S17</fullName>
    </alternativeName>
</protein>
<accession>Q962R2</accession>
<reference key="1">
    <citation type="journal article" date="2003" name="Bioinformatics">
        <title>Annotation pattern of ESTs from Spodoptera frugiperda Sf9 cells and analysis of the ribosomal protein genes reveal insect-specific features and unexpectedly low codon usage bias.</title>
        <authorList>
            <person name="Landais I."/>
            <person name="Ogliastro M."/>
            <person name="Mita K."/>
            <person name="Nohata J."/>
            <person name="Lopez-Ferber M."/>
            <person name="Duonor-Cerutti M."/>
            <person name="Shimada T."/>
            <person name="Fournier P."/>
            <person name="Devauchelle G."/>
        </authorList>
    </citation>
    <scope>NUCLEOTIDE SEQUENCE [LARGE SCALE MRNA]</scope>
</reference>
<name>RS17_SPOFR</name>